<protein>
    <recommendedName>
        <fullName evidence="1">Cysteine--tRNA ligase</fullName>
        <ecNumber evidence="1">6.1.1.16</ecNumber>
    </recommendedName>
    <alternativeName>
        <fullName evidence="1">Cysteinyl-tRNA synthetase</fullName>
        <shortName evidence="1">CysRS</shortName>
    </alternativeName>
</protein>
<evidence type="ECO:0000255" key="1">
    <source>
        <dbReference type="HAMAP-Rule" id="MF_00041"/>
    </source>
</evidence>
<name>SYC_ECTM1</name>
<keyword id="KW-0030">Aminoacyl-tRNA synthetase</keyword>
<keyword id="KW-0067">ATP-binding</keyword>
<keyword id="KW-0963">Cytoplasm</keyword>
<keyword id="KW-0436">Ligase</keyword>
<keyword id="KW-0479">Metal-binding</keyword>
<keyword id="KW-0547">Nucleotide-binding</keyword>
<keyword id="KW-0648">Protein biosynthesis</keyword>
<keyword id="KW-0862">Zinc</keyword>
<gene>
    <name evidence="1" type="primary">cysS</name>
    <name type="ordered locus">Pmen_2571</name>
</gene>
<comment type="catalytic activity">
    <reaction evidence="1">
        <text>tRNA(Cys) + L-cysteine + ATP = L-cysteinyl-tRNA(Cys) + AMP + diphosphate</text>
        <dbReference type="Rhea" id="RHEA:17773"/>
        <dbReference type="Rhea" id="RHEA-COMP:9661"/>
        <dbReference type="Rhea" id="RHEA-COMP:9679"/>
        <dbReference type="ChEBI" id="CHEBI:30616"/>
        <dbReference type="ChEBI" id="CHEBI:33019"/>
        <dbReference type="ChEBI" id="CHEBI:35235"/>
        <dbReference type="ChEBI" id="CHEBI:78442"/>
        <dbReference type="ChEBI" id="CHEBI:78517"/>
        <dbReference type="ChEBI" id="CHEBI:456215"/>
        <dbReference type="EC" id="6.1.1.16"/>
    </reaction>
</comment>
<comment type="cofactor">
    <cofactor evidence="1">
        <name>Zn(2+)</name>
        <dbReference type="ChEBI" id="CHEBI:29105"/>
    </cofactor>
    <text evidence="1">Binds 1 zinc ion per subunit.</text>
</comment>
<comment type="subunit">
    <text evidence="1">Monomer.</text>
</comment>
<comment type="subcellular location">
    <subcellularLocation>
        <location evidence="1">Cytoplasm</location>
    </subcellularLocation>
</comment>
<comment type="similarity">
    <text evidence="1">Belongs to the class-I aminoacyl-tRNA synthetase family.</text>
</comment>
<feature type="chain" id="PRO_0000332879" description="Cysteine--tRNA ligase">
    <location>
        <begin position="1"/>
        <end position="461"/>
    </location>
</feature>
<feature type="short sequence motif" description="'HIGH' region">
    <location>
        <begin position="31"/>
        <end position="41"/>
    </location>
</feature>
<feature type="short sequence motif" description="'KMSKS' region">
    <location>
        <begin position="267"/>
        <end position="271"/>
    </location>
</feature>
<feature type="binding site" evidence="1">
    <location>
        <position position="29"/>
    </location>
    <ligand>
        <name>Zn(2+)</name>
        <dbReference type="ChEBI" id="CHEBI:29105"/>
    </ligand>
</feature>
<feature type="binding site" evidence="1">
    <location>
        <position position="210"/>
    </location>
    <ligand>
        <name>Zn(2+)</name>
        <dbReference type="ChEBI" id="CHEBI:29105"/>
    </ligand>
</feature>
<feature type="binding site" evidence="1">
    <location>
        <position position="235"/>
    </location>
    <ligand>
        <name>Zn(2+)</name>
        <dbReference type="ChEBI" id="CHEBI:29105"/>
    </ligand>
</feature>
<feature type="binding site" evidence="1">
    <location>
        <position position="239"/>
    </location>
    <ligand>
        <name>Zn(2+)</name>
        <dbReference type="ChEBI" id="CHEBI:29105"/>
    </ligand>
</feature>
<feature type="binding site" evidence="1">
    <location>
        <position position="270"/>
    </location>
    <ligand>
        <name>ATP</name>
        <dbReference type="ChEBI" id="CHEBI:30616"/>
    </ligand>
</feature>
<dbReference type="EC" id="6.1.1.16" evidence="1"/>
<dbReference type="EMBL" id="CP000680">
    <property type="protein sequence ID" value="ABP85327.1"/>
    <property type="molecule type" value="Genomic_DNA"/>
</dbReference>
<dbReference type="SMR" id="A4XVG1"/>
<dbReference type="STRING" id="399739.Pmen_2571"/>
<dbReference type="KEGG" id="pmy:Pmen_2571"/>
<dbReference type="PATRIC" id="fig|399739.8.peg.2597"/>
<dbReference type="eggNOG" id="COG0215">
    <property type="taxonomic scope" value="Bacteria"/>
</dbReference>
<dbReference type="HOGENOM" id="CLU_013528_0_1_6"/>
<dbReference type="OrthoDB" id="9815130at2"/>
<dbReference type="GO" id="GO:0005829">
    <property type="term" value="C:cytosol"/>
    <property type="evidence" value="ECO:0007669"/>
    <property type="project" value="TreeGrafter"/>
</dbReference>
<dbReference type="GO" id="GO:0005524">
    <property type="term" value="F:ATP binding"/>
    <property type="evidence" value="ECO:0007669"/>
    <property type="project" value="UniProtKB-UniRule"/>
</dbReference>
<dbReference type="GO" id="GO:0004817">
    <property type="term" value="F:cysteine-tRNA ligase activity"/>
    <property type="evidence" value="ECO:0007669"/>
    <property type="project" value="UniProtKB-UniRule"/>
</dbReference>
<dbReference type="GO" id="GO:0008270">
    <property type="term" value="F:zinc ion binding"/>
    <property type="evidence" value="ECO:0007669"/>
    <property type="project" value="UniProtKB-UniRule"/>
</dbReference>
<dbReference type="GO" id="GO:0006423">
    <property type="term" value="P:cysteinyl-tRNA aminoacylation"/>
    <property type="evidence" value="ECO:0007669"/>
    <property type="project" value="UniProtKB-UniRule"/>
</dbReference>
<dbReference type="CDD" id="cd07963">
    <property type="entry name" value="Anticodon_Ia_Cys"/>
    <property type="match status" value="1"/>
</dbReference>
<dbReference type="CDD" id="cd00672">
    <property type="entry name" value="CysRS_core"/>
    <property type="match status" value="1"/>
</dbReference>
<dbReference type="FunFam" id="3.40.50.620:FF:000009">
    <property type="entry name" value="Cysteine--tRNA ligase"/>
    <property type="match status" value="1"/>
</dbReference>
<dbReference type="Gene3D" id="1.20.120.1910">
    <property type="entry name" value="Cysteine-tRNA ligase, C-terminal anti-codon recognition domain"/>
    <property type="match status" value="1"/>
</dbReference>
<dbReference type="Gene3D" id="3.40.50.620">
    <property type="entry name" value="HUPs"/>
    <property type="match status" value="1"/>
</dbReference>
<dbReference type="HAMAP" id="MF_00041">
    <property type="entry name" value="Cys_tRNA_synth"/>
    <property type="match status" value="1"/>
</dbReference>
<dbReference type="InterPro" id="IPR015803">
    <property type="entry name" value="Cys-tRNA-ligase"/>
</dbReference>
<dbReference type="InterPro" id="IPR015273">
    <property type="entry name" value="Cys-tRNA-synt_Ia_DALR"/>
</dbReference>
<dbReference type="InterPro" id="IPR024909">
    <property type="entry name" value="Cys-tRNA/MSH_ligase"/>
</dbReference>
<dbReference type="InterPro" id="IPR056411">
    <property type="entry name" value="CysS_C"/>
</dbReference>
<dbReference type="InterPro" id="IPR014729">
    <property type="entry name" value="Rossmann-like_a/b/a_fold"/>
</dbReference>
<dbReference type="InterPro" id="IPR032678">
    <property type="entry name" value="tRNA-synt_1_cat_dom"/>
</dbReference>
<dbReference type="InterPro" id="IPR009080">
    <property type="entry name" value="tRNAsynth_Ia_anticodon-bd"/>
</dbReference>
<dbReference type="NCBIfam" id="TIGR00435">
    <property type="entry name" value="cysS"/>
    <property type="match status" value="1"/>
</dbReference>
<dbReference type="PANTHER" id="PTHR10890:SF3">
    <property type="entry name" value="CYSTEINE--TRNA LIGASE, CYTOPLASMIC"/>
    <property type="match status" value="1"/>
</dbReference>
<dbReference type="PANTHER" id="PTHR10890">
    <property type="entry name" value="CYSTEINYL-TRNA SYNTHETASE"/>
    <property type="match status" value="1"/>
</dbReference>
<dbReference type="Pfam" id="PF23493">
    <property type="entry name" value="CysS_C"/>
    <property type="match status" value="1"/>
</dbReference>
<dbReference type="Pfam" id="PF09190">
    <property type="entry name" value="DALR_2"/>
    <property type="match status" value="1"/>
</dbReference>
<dbReference type="Pfam" id="PF01406">
    <property type="entry name" value="tRNA-synt_1e"/>
    <property type="match status" value="1"/>
</dbReference>
<dbReference type="PRINTS" id="PR00983">
    <property type="entry name" value="TRNASYNTHCYS"/>
</dbReference>
<dbReference type="SMART" id="SM00840">
    <property type="entry name" value="DALR_2"/>
    <property type="match status" value="1"/>
</dbReference>
<dbReference type="SUPFAM" id="SSF47323">
    <property type="entry name" value="Anticodon-binding domain of a subclass of class I aminoacyl-tRNA synthetases"/>
    <property type="match status" value="1"/>
</dbReference>
<dbReference type="SUPFAM" id="SSF52374">
    <property type="entry name" value="Nucleotidylyl transferase"/>
    <property type="match status" value="1"/>
</dbReference>
<accession>A4XVG1</accession>
<sequence length="461" mass="51405">MALSIYNTLTKTKDVFQPLVGNQVRMYVCGMTVYDFCHIGHARVMVAFDVVTRWLRQRGYDVTYVRNITDIDDKIIKRANENGEPFEALVERMIAAMHEDEARLSVLRPDIEPRATGHIAGMHQMIQTLIDKGYAYAPGNGDVYYRVTRFETYGKLSRRKIDELKIGARIEVDEIKEDPLDFVLWKGAKPGEPSWDSPWGKGRPGWHIECSVMSTCCLGETFDIHGGGPDLVFPHHENEIAQSEAATGKQYANAWMHAGAVRVDGEKMSKSLGNFFTIREVLEKYHPEVVRYLLVSSHYRSPINYSEESLKEAKGALERFYNGLKGLPEAAPAGGEAYVERFGVAMDDDFNSPEACAVLFEMIREVNRLRESDVQAAAGLAAQLKQLASVLGVLQLEPEAFLQAGAAGKVDAAEVEALIAARLQARADKNWAESDRIRDQLTAMGVVLEDGKGGTTWRLAE</sequence>
<proteinExistence type="inferred from homology"/>
<reference key="1">
    <citation type="submission" date="2007-04" db="EMBL/GenBank/DDBJ databases">
        <title>Complete sequence of Pseudomonas mendocina ymp.</title>
        <authorList>
            <consortium name="US DOE Joint Genome Institute"/>
            <person name="Copeland A."/>
            <person name="Lucas S."/>
            <person name="Lapidus A."/>
            <person name="Barry K."/>
            <person name="Glavina del Rio T."/>
            <person name="Dalin E."/>
            <person name="Tice H."/>
            <person name="Pitluck S."/>
            <person name="Kiss H."/>
            <person name="Brettin T."/>
            <person name="Detter J.C."/>
            <person name="Bruce D."/>
            <person name="Han C."/>
            <person name="Schmutz J."/>
            <person name="Larimer F."/>
            <person name="Land M."/>
            <person name="Hauser L."/>
            <person name="Kyrpides N."/>
            <person name="Mikhailova N."/>
            <person name="Hersman L."/>
            <person name="Dubois J."/>
            <person name="Maurice P."/>
            <person name="Richardson P."/>
        </authorList>
    </citation>
    <scope>NUCLEOTIDE SEQUENCE [LARGE SCALE GENOMIC DNA]</scope>
    <source>
        <strain>ymp</strain>
    </source>
</reference>
<organism>
    <name type="scientific">Ectopseudomonas mendocina (strain ymp)</name>
    <name type="common">Pseudomonas mendocina</name>
    <dbReference type="NCBI Taxonomy" id="399739"/>
    <lineage>
        <taxon>Bacteria</taxon>
        <taxon>Pseudomonadati</taxon>
        <taxon>Pseudomonadota</taxon>
        <taxon>Gammaproteobacteria</taxon>
        <taxon>Pseudomonadales</taxon>
        <taxon>Pseudomonadaceae</taxon>
        <taxon>Ectopseudomonas</taxon>
    </lineage>
</organism>